<accession>A0A0H2ZFK2</accession>
<evidence type="ECO:0000255" key="1"/>
<evidence type="ECO:0000255" key="2">
    <source>
        <dbReference type="PROSITE-ProRule" id="PRU00160"/>
    </source>
</evidence>
<evidence type="ECO:0000269" key="3">
    <source>
    </source>
</evidence>
<evidence type="ECO:0000269" key="4">
    <source>
    </source>
</evidence>
<evidence type="ECO:0000269" key="5">
    <source>
    </source>
</evidence>
<evidence type="ECO:0000269" key="6">
    <source>
    </source>
</evidence>
<evidence type="ECO:0000303" key="7">
    <source>
    </source>
</evidence>
<evidence type="ECO:0000303" key="8">
    <source>
    </source>
</evidence>
<evidence type="ECO:0000303" key="9">
    <source>
    </source>
</evidence>
<evidence type="ECO:0000305" key="10"/>
<evidence type="ECO:0000305" key="11">
    <source>
    </source>
</evidence>
<evidence type="ECO:0000305" key="12">
    <source>
    </source>
</evidence>
<evidence type="ECO:0000312" key="13">
    <source>
        <dbReference type="EMBL" id="ABJ13157.1"/>
    </source>
</evidence>
<evidence type="ECO:0007744" key="14">
    <source>
        <dbReference type="PDB" id="2M3V"/>
    </source>
</evidence>
<evidence type="ECO:0007829" key="15">
    <source>
        <dbReference type="PDB" id="2M3V"/>
    </source>
</evidence>
<gene>
    <name evidence="7" type="primary">tpbA</name>
    <name evidence="13" type="ordered locus">PA14_13660</name>
</gene>
<reference key="1">
    <citation type="journal article" date="2006" name="Genome Biol.">
        <title>Genomic analysis reveals that Pseudomonas aeruginosa virulence is combinatorial.</title>
        <authorList>
            <person name="Lee D.G."/>
            <person name="Urbach J.M."/>
            <person name="Wu G."/>
            <person name="Liberati N.T."/>
            <person name="Feinbaum R.L."/>
            <person name="Miyata S."/>
            <person name="Diggins L.T."/>
            <person name="He J."/>
            <person name="Saucier M."/>
            <person name="Deziel E."/>
            <person name="Friedman L."/>
            <person name="Li L."/>
            <person name="Grills G."/>
            <person name="Montgomery K."/>
            <person name="Kucherlapati R."/>
            <person name="Rahme L.G."/>
            <person name="Ausubel F.M."/>
        </authorList>
    </citation>
    <scope>NUCLEOTIDE SEQUENCE [LARGE SCALE GENOMIC DNA]</scope>
    <source>
        <strain>UCBPP-PA14</strain>
    </source>
</reference>
<reference key="2">
    <citation type="journal article" date="2009" name="PLoS Pathog.">
        <title>Connecting quorum sensing, c-di-GMP, pel polysaccharide, and biofilm formation in Pseudomonas aeruginosa through tyrosine phosphatase TpbA (PA3885).</title>
        <authorList>
            <person name="Ueda A."/>
            <person name="Wood T.K."/>
        </authorList>
    </citation>
    <scope>FUNCTION</scope>
    <scope>CATALYTIC ACTIVITY</scope>
    <scope>ACTIVITY REGULATION</scope>
    <scope>SUBCELLULAR LOCATION</scope>
    <scope>INDUCTION</scope>
    <scope>DISRUPTION PHENOTYPE</scope>
    <source>
        <strain>UCBPP-PA14</strain>
    </source>
</reference>
<reference key="3">
    <citation type="journal article" date="2010" name="Biochem. Biophys. Res. Commun.">
        <title>Tyrosine phosphatase TpbA controls rugose colony formation in Pseudomonas aeruginosa by dephosphorylating diguanylate cyclase TpbB.</title>
        <authorList>
            <person name="Pu M."/>
            <person name="Wood T.K."/>
        </authorList>
    </citation>
    <scope>FUNCTION</scope>
    <scope>CATALYTIC ACTIVITY</scope>
    <scope>DISRUPTION PHENOTYPE</scope>
    <source>
        <strain>UCBPP-PA14</strain>
    </source>
</reference>
<reference key="4">
    <citation type="journal article" date="2010" name="Environ. Microbiol. Rep.">
        <title>Tyrosine phosphatase TpbA of Pseudomonas aeruginosa controls extracellular DNA via cyclic diguanylic acid concentrations.</title>
        <authorList>
            <person name="Ueda A."/>
            <person name="Wood T.K."/>
        </authorList>
    </citation>
    <scope>FUNCTION</scope>
    <scope>DISRUPTION PHENOTYPE</scope>
    <source>
        <strain>UCBPP-PA14</strain>
    </source>
</reference>
<reference key="5">
    <citation type="journal article" date="2013" name="Biomol. NMR. Assign.">
        <title>Backbone and sidechain (1)H, (15)N and (13)C assignments of Tyrosine Phosphatase related to Biofilm formation A (TpbA) of Pseudomonas aeruginosa.</title>
        <authorList>
            <person name="Koveal D."/>
            <person name="Jayasundera T.B."/>
            <person name="Wood T.K."/>
            <person name="Peti W."/>
            <person name="Page R."/>
        </authorList>
    </citation>
    <scope>NMR SPECTROSCOPY</scope>
    <source>
        <strain>UCBPP-PA14</strain>
    </source>
</reference>
<reference evidence="14" key="6">
    <citation type="journal article" date="2013" name="J. Mol. Biol.">
        <title>Ligand binding reduces conformational flexibility in the active site of tyrosine phosphatase related to biofilm formation A (TpbA) from Pseudomonasaeruginosa.</title>
        <authorList>
            <person name="Koveal D."/>
            <person name="Clarkson M.W."/>
            <person name="Wood T.K."/>
            <person name="Page R."/>
            <person name="Peti W."/>
        </authorList>
    </citation>
    <scope>STRUCTURE BY NMR OF 29-218</scope>
    <scope>BIOPHYSICOCHEMICAL PROPERTIES</scope>
    <scope>SUBUNIT</scope>
    <scope>DOMAIN</scope>
    <scope>ACTIVE SITE</scope>
    <scope>MUTAGENESIS OF ASP-105 AND CYS-132</scope>
    <source>
        <strain>UCBPP-PA14</strain>
    </source>
</reference>
<name>TPBA_PSEAB</name>
<comment type="function">
    <text evidence="3 4 6">Phosphatase that regulates diverse phenotypes in P.aeruginosa via regulation of the concentration of cellular c-di-GMP (PubMed:19543378). Acts by dephosphorylating the membrane-anchored diguanylate cyclase TpbB at tyrosine and serine/threonine sites, leading to inactivation of TpbB and reduced c-di-GMP production (PubMed:19543378, PubMed:20946878). The reduced cellular c-di-GMP concentration leads to reduced adhesin expression, reduced extracellular polysaccharide (EPS) production, pellicule production, cell aggregation and biofilm formation, and enhanced swimming and swarming (PubMed:19543378). It affects colony morphology and controls rugose colony formation (PubMed:19543378, PubMed:20946878). TpbA also acts as a positive regulator of extracellular DNA (eDNA, a major component of the biofilm matrix) and cell lysis by reducing c-di-GMP concentrations (PubMed:23766119). In vitro shows phosphatase activity toward p-nitrophenyl phosphate (pNPP), tyrosine phosphopeptides and a threonine phosphopeptide (PubMed:19543378, PubMed:20946878). Does not have phosphodiesterases (PDE) activity, and cannot degrade c-di-GMP (PubMed:20946878).</text>
</comment>
<comment type="catalytic activity">
    <reaction evidence="3 4">
        <text>O-phospho-L-tyrosyl-[protein] + H2O = L-tyrosyl-[protein] + phosphate</text>
        <dbReference type="Rhea" id="RHEA:10684"/>
        <dbReference type="Rhea" id="RHEA-COMP:10136"/>
        <dbReference type="Rhea" id="RHEA-COMP:20101"/>
        <dbReference type="ChEBI" id="CHEBI:15377"/>
        <dbReference type="ChEBI" id="CHEBI:43474"/>
        <dbReference type="ChEBI" id="CHEBI:46858"/>
        <dbReference type="ChEBI" id="CHEBI:61978"/>
        <dbReference type="EC" id="3.1.3.48"/>
    </reaction>
    <physiologicalReaction direction="left-to-right" evidence="3 4">
        <dbReference type="Rhea" id="RHEA:10685"/>
    </physiologicalReaction>
</comment>
<comment type="catalytic activity">
    <reaction evidence="4">
        <text>O-phospho-L-threonyl-[protein] + H2O = L-threonyl-[protein] + phosphate</text>
        <dbReference type="Rhea" id="RHEA:47004"/>
        <dbReference type="Rhea" id="RHEA-COMP:11060"/>
        <dbReference type="Rhea" id="RHEA-COMP:11605"/>
        <dbReference type="ChEBI" id="CHEBI:15377"/>
        <dbReference type="ChEBI" id="CHEBI:30013"/>
        <dbReference type="ChEBI" id="CHEBI:43474"/>
        <dbReference type="ChEBI" id="CHEBI:61977"/>
        <dbReference type="EC" id="3.1.3.16"/>
    </reaction>
    <physiologicalReaction direction="left-to-right" evidence="4">
        <dbReference type="Rhea" id="RHEA:47005"/>
    </physiologicalReaction>
</comment>
<comment type="catalytic activity">
    <reaction evidence="11">
        <text>O-phospho-L-seryl-[protein] + H2O = L-seryl-[protein] + phosphate</text>
        <dbReference type="Rhea" id="RHEA:20629"/>
        <dbReference type="Rhea" id="RHEA-COMP:9863"/>
        <dbReference type="Rhea" id="RHEA-COMP:11604"/>
        <dbReference type="ChEBI" id="CHEBI:15377"/>
        <dbReference type="ChEBI" id="CHEBI:29999"/>
        <dbReference type="ChEBI" id="CHEBI:43474"/>
        <dbReference type="ChEBI" id="CHEBI:83421"/>
        <dbReference type="EC" id="3.1.3.16"/>
    </reaction>
    <physiologicalReaction direction="left-to-right" evidence="11">
        <dbReference type="Rhea" id="RHEA:20630"/>
    </physiologicalReaction>
</comment>
<comment type="activity regulation">
    <text evidence="3">The phosphatase activity is completely inhibited by trisodium orthovanadate, a tyrosine phosphatase specific inhibitor.</text>
</comment>
<comment type="biophysicochemical properties">
    <kinetics>
        <KM evidence="5">11.21 mM for pNPP</KM>
        <text evidence="5">kcat is 0.00162 sec(-1) with pNPP as substrate.</text>
    </kinetics>
</comment>
<comment type="subunit">
    <text evidence="5">Monomer in solution.</text>
</comment>
<comment type="subcellular location">
    <subcellularLocation>
        <location evidence="3">Periplasm</location>
    </subcellularLocation>
</comment>
<comment type="induction">
    <text evidence="3">Expression is regulated by the Las-QS system (PubMed:19543378). Probably negatively regulates indirectly its own expression (PubMed:19543378).</text>
</comment>
<comment type="domain">
    <text evidence="5">Adopts a canonical dual specific tyrosine phosphatase (DUSP) fold, similar to eukaryotic DUSPs (PubMed:23524133). In the absence of ligand, the protein phosphatase loop is disordered and the general acid loop adopts an open conformation, placing the catalytic aspartate, Asp-105, more than 11 angstroms away from the active site (PubMed:23524133). Ligand binding reduces the conformational dynamics that occur on multiple timescales in the loops at the active site (PubMed:23524133).</text>
</comment>
<comment type="disruption phenotype">
    <text evidence="3 4 6">Inactivation of the gene alters expression of diverse loci (PubMed:19543378). Inactivation of the gene increases cellular c-di-GMP concentrations, increases biofilm formation, EPS production, attachment and pellicle formation, and causes cell aggregation (PubMed:19543378). It also abolishes swarming, decreases swimming motility by 40%, and affects colony morphology, converting white smooth wild-type colonies to red, wrinkly colonies (PubMed:19543378). Mutation reduces extracellular DNA (eDNA) and decreases cell lysis (PubMed:23766119). The tpbA-tpbB double mutation restores eDNA to that of the wild-type level (PubMed:23766119). Mutant forms flat and thick biofilms (PubMed:23766119). Inactivation results in greater phosphorylation of TpbB (PubMed:20946878).</text>
</comment>
<comment type="similarity">
    <text evidence="10">Belongs to the protein-tyrosine phosphatase family.</text>
</comment>
<keyword id="KW-0002">3D-structure</keyword>
<keyword id="KW-0378">Hydrolase</keyword>
<keyword id="KW-0574">Periplasm</keyword>
<keyword id="KW-0904">Protein phosphatase</keyword>
<keyword id="KW-0732">Signal</keyword>
<protein>
    <recommendedName>
        <fullName evidence="10">Dual specificity protein phosphatase TpbA</fullName>
        <shortName evidence="9">DUSP</shortName>
        <ecNumber evidence="4">3.1.3.16</ecNumber>
        <ecNumber evidence="3 4">3.1.3.48</ecNumber>
    </recommendedName>
    <alternativeName>
        <fullName evidence="8">Dual specific tyrosine phosphatase</fullName>
    </alternativeName>
    <alternativeName>
        <fullName evidence="7">Protein tyrosine phosphatase</fullName>
    </alternativeName>
    <alternativeName>
        <fullName evidence="7">Tyrosine phosphatase related to biofilm formation</fullName>
    </alternativeName>
</protein>
<organism>
    <name type="scientific">Pseudomonas aeruginosa (strain UCBPP-PA14)</name>
    <dbReference type="NCBI Taxonomy" id="208963"/>
    <lineage>
        <taxon>Bacteria</taxon>
        <taxon>Pseudomonadati</taxon>
        <taxon>Pseudomonadota</taxon>
        <taxon>Gammaproteobacteria</taxon>
        <taxon>Pseudomonadales</taxon>
        <taxon>Pseudomonadaceae</taxon>
        <taxon>Pseudomonas</taxon>
    </lineage>
</organism>
<proteinExistence type="evidence at protein level"/>
<sequence length="218" mass="23993">MHRSPLAWLRLLLAAVLGAFLLGGPLHAAETAAPRSPAWAQAVDPSINLYRMSPTLYRSALPNAQSVALLQRLQVKTVVSFIKDDDRAWLGQAPVRVVSLPTHADRVDDAEVLSVLRQLQAAEREGPVLMHCKHGNNRTGLFAAMYRIVVQGWDKQAALEEMQRGGFGDEDDMRDASAYVRGADVDGLRLAMANGECSPSRFALCHVREWMAQALDRP</sequence>
<dbReference type="EC" id="3.1.3.16" evidence="4"/>
<dbReference type="EC" id="3.1.3.48" evidence="3 4"/>
<dbReference type="EMBL" id="CP000438">
    <property type="protein sequence ID" value="ABJ13157.1"/>
    <property type="molecule type" value="Genomic_DNA"/>
</dbReference>
<dbReference type="RefSeq" id="WP_003111594.1">
    <property type="nucleotide sequence ID" value="NZ_CP034244.1"/>
</dbReference>
<dbReference type="PDB" id="2M3V">
    <property type="method" value="NMR"/>
    <property type="chains" value="A=29-218"/>
</dbReference>
<dbReference type="PDBsum" id="2M3V"/>
<dbReference type="SMR" id="A0A0H2ZFK2"/>
<dbReference type="KEGG" id="pau:PA14_13660"/>
<dbReference type="HOGENOM" id="CLU_086657_0_0_6"/>
<dbReference type="BioCyc" id="PAER208963:G1G74-1129-MONOMER"/>
<dbReference type="EvolutionaryTrace" id="A0A0H2ZFK2"/>
<dbReference type="Proteomes" id="UP000000653">
    <property type="component" value="Chromosome"/>
</dbReference>
<dbReference type="GO" id="GO:0042597">
    <property type="term" value="C:periplasmic space"/>
    <property type="evidence" value="ECO:0007669"/>
    <property type="project" value="UniProtKB-SubCell"/>
</dbReference>
<dbReference type="GO" id="GO:0004721">
    <property type="term" value="F:phosphoprotein phosphatase activity"/>
    <property type="evidence" value="ECO:0007669"/>
    <property type="project" value="UniProtKB-KW"/>
</dbReference>
<dbReference type="CDD" id="cd14529">
    <property type="entry name" value="TpbA-like"/>
    <property type="match status" value="1"/>
</dbReference>
<dbReference type="Gene3D" id="3.90.190.10">
    <property type="entry name" value="Protein tyrosine phosphatase superfamily"/>
    <property type="match status" value="1"/>
</dbReference>
<dbReference type="InterPro" id="IPR029021">
    <property type="entry name" value="Prot-tyrosine_phosphatase-like"/>
</dbReference>
<dbReference type="InterPro" id="IPR004861">
    <property type="entry name" value="Siw14-like"/>
</dbReference>
<dbReference type="InterPro" id="IPR016130">
    <property type="entry name" value="Tyr_Pase_AS"/>
</dbReference>
<dbReference type="InterPro" id="IPR000387">
    <property type="entry name" value="Tyr_Pase_dom"/>
</dbReference>
<dbReference type="PANTHER" id="PTHR31126:SF72">
    <property type="entry name" value="DUAL SPECIFICITY PROTEIN PHOSPHATASE TPBA"/>
    <property type="match status" value="1"/>
</dbReference>
<dbReference type="PANTHER" id="PTHR31126">
    <property type="entry name" value="TYROSINE-PROTEIN PHOSPHATASE"/>
    <property type="match status" value="1"/>
</dbReference>
<dbReference type="Pfam" id="PF03162">
    <property type="entry name" value="Y_phosphatase2"/>
    <property type="match status" value="1"/>
</dbReference>
<dbReference type="SUPFAM" id="SSF52799">
    <property type="entry name" value="(Phosphotyrosine protein) phosphatases II"/>
    <property type="match status" value="1"/>
</dbReference>
<dbReference type="PROSITE" id="PS00383">
    <property type="entry name" value="TYR_PHOSPHATASE_1"/>
    <property type="match status" value="1"/>
</dbReference>
<dbReference type="PROSITE" id="PS50056">
    <property type="entry name" value="TYR_PHOSPHATASE_2"/>
    <property type="match status" value="1"/>
</dbReference>
<feature type="signal peptide" evidence="1">
    <location>
        <begin position="1"/>
        <end position="28"/>
    </location>
</feature>
<feature type="chain" id="PRO_5030007726" description="Dual specificity protein phosphatase TpbA">
    <location>
        <begin position="29"/>
        <end position="218"/>
    </location>
</feature>
<feature type="domain" description="Tyrosine-protein phosphatase" evidence="2">
    <location>
        <begin position="44"/>
        <end position="188"/>
    </location>
</feature>
<feature type="active site" description="Proton donor/acceptor" evidence="12">
    <location>
        <position position="105"/>
    </location>
</feature>
<feature type="active site" description="Phosphocysteine intermediate" evidence="2 12">
    <location>
        <position position="132"/>
    </location>
</feature>
<feature type="mutagenesis site" description="53% decrease in catalytic efficiency with pNPP as substrate." evidence="5">
    <original>D</original>
    <variation>A</variation>
    <location>
        <position position="105"/>
    </location>
</feature>
<feature type="mutagenesis site" description="Loss of phosphatase activity with pNPP as substrate." evidence="5">
    <original>C</original>
    <variation>S</variation>
    <location>
        <position position="132"/>
    </location>
</feature>
<feature type="strand" evidence="15">
    <location>
        <begin position="33"/>
        <end position="35"/>
    </location>
</feature>
<feature type="strand" evidence="15">
    <location>
        <begin position="41"/>
        <end position="44"/>
    </location>
</feature>
<feature type="turn" evidence="15">
    <location>
        <begin position="45"/>
        <end position="48"/>
    </location>
</feature>
<feature type="strand" evidence="15">
    <location>
        <begin position="49"/>
        <end position="51"/>
    </location>
</feature>
<feature type="strand" evidence="15">
    <location>
        <begin position="57"/>
        <end position="60"/>
    </location>
</feature>
<feature type="helix" evidence="15">
    <location>
        <begin position="64"/>
        <end position="66"/>
    </location>
</feature>
<feature type="helix" evidence="15">
    <location>
        <begin position="67"/>
        <end position="73"/>
    </location>
</feature>
<feature type="helix" evidence="15">
    <location>
        <begin position="87"/>
        <end position="90"/>
    </location>
</feature>
<feature type="helix" evidence="15">
    <location>
        <begin position="109"/>
        <end position="122"/>
    </location>
</feature>
<feature type="turn" evidence="15">
    <location>
        <begin position="123"/>
        <end position="125"/>
    </location>
</feature>
<feature type="strand" evidence="15">
    <location>
        <begin position="129"/>
        <end position="131"/>
    </location>
</feature>
<feature type="helix" evidence="15">
    <location>
        <begin position="136"/>
        <end position="151"/>
    </location>
</feature>
<feature type="helix" evidence="15">
    <location>
        <begin position="155"/>
        <end position="158"/>
    </location>
</feature>
<feature type="helix" evidence="15">
    <location>
        <begin position="159"/>
        <end position="162"/>
    </location>
</feature>
<feature type="turn" evidence="15">
    <location>
        <begin position="163"/>
        <end position="165"/>
    </location>
</feature>
<feature type="strand" evidence="15">
    <location>
        <begin position="166"/>
        <end position="172"/>
    </location>
</feature>
<feature type="helix" evidence="15">
    <location>
        <begin position="176"/>
        <end position="182"/>
    </location>
</feature>
<feature type="helix" evidence="15">
    <location>
        <begin position="185"/>
        <end position="193"/>
    </location>
</feature>
<feature type="helix" evidence="15">
    <location>
        <begin position="201"/>
        <end position="205"/>
    </location>
</feature>